<keyword id="KW-0210">Decarboxylase</keyword>
<keyword id="KW-0456">Lyase</keyword>
<keyword id="KW-0665">Pyrimidine biosynthesis</keyword>
<dbReference type="EC" id="4.1.1.23" evidence="1"/>
<dbReference type="EMBL" id="CP000246">
    <property type="protein sequence ID" value="ABG83795.1"/>
    <property type="molecule type" value="Genomic_DNA"/>
</dbReference>
<dbReference type="RefSeq" id="WP_011590687.1">
    <property type="nucleotide sequence ID" value="NC_008261.1"/>
</dbReference>
<dbReference type="SMR" id="Q0TRB0"/>
<dbReference type="STRING" id="195103.CPF_1384"/>
<dbReference type="PaxDb" id="195103-CPF_1384"/>
<dbReference type="GeneID" id="93002299"/>
<dbReference type="KEGG" id="cpf:CPF_1384"/>
<dbReference type="eggNOG" id="COG0284">
    <property type="taxonomic scope" value="Bacteria"/>
</dbReference>
<dbReference type="HOGENOM" id="CLU_060704_1_1_9"/>
<dbReference type="UniPathway" id="UPA00070">
    <property type="reaction ID" value="UER00120"/>
</dbReference>
<dbReference type="Proteomes" id="UP000001823">
    <property type="component" value="Chromosome"/>
</dbReference>
<dbReference type="GO" id="GO:0004590">
    <property type="term" value="F:orotidine-5'-phosphate decarboxylase activity"/>
    <property type="evidence" value="ECO:0007669"/>
    <property type="project" value="UniProtKB-UniRule"/>
</dbReference>
<dbReference type="GO" id="GO:0006207">
    <property type="term" value="P:'de novo' pyrimidine nucleobase biosynthetic process"/>
    <property type="evidence" value="ECO:0007669"/>
    <property type="project" value="InterPro"/>
</dbReference>
<dbReference type="GO" id="GO:0044205">
    <property type="term" value="P:'de novo' UMP biosynthetic process"/>
    <property type="evidence" value="ECO:0007669"/>
    <property type="project" value="UniProtKB-UniRule"/>
</dbReference>
<dbReference type="CDD" id="cd04725">
    <property type="entry name" value="OMP_decarboxylase_like"/>
    <property type="match status" value="1"/>
</dbReference>
<dbReference type="FunFam" id="3.20.20.70:FF:000246">
    <property type="entry name" value="Orotidine 5'-phosphate decarboxylase"/>
    <property type="match status" value="1"/>
</dbReference>
<dbReference type="Gene3D" id="3.20.20.70">
    <property type="entry name" value="Aldolase class I"/>
    <property type="match status" value="1"/>
</dbReference>
<dbReference type="HAMAP" id="MF_01215">
    <property type="entry name" value="OMPdecase_type2"/>
    <property type="match status" value="1"/>
</dbReference>
<dbReference type="InterPro" id="IPR013785">
    <property type="entry name" value="Aldolase_TIM"/>
</dbReference>
<dbReference type="InterPro" id="IPR018089">
    <property type="entry name" value="OMPdecase_AS"/>
</dbReference>
<dbReference type="InterPro" id="IPR011995">
    <property type="entry name" value="OMPdecase_type-2"/>
</dbReference>
<dbReference type="InterPro" id="IPR001754">
    <property type="entry name" value="OMPdeCOase_dom"/>
</dbReference>
<dbReference type="InterPro" id="IPR011060">
    <property type="entry name" value="RibuloseP-bd_barrel"/>
</dbReference>
<dbReference type="NCBIfam" id="TIGR02127">
    <property type="entry name" value="pyrF_sub2"/>
    <property type="match status" value="1"/>
</dbReference>
<dbReference type="PANTHER" id="PTHR43375">
    <property type="entry name" value="OROTIDINE 5'-PHOSPHATE DECARBOXYLASE"/>
    <property type="match status" value="1"/>
</dbReference>
<dbReference type="PANTHER" id="PTHR43375:SF1">
    <property type="entry name" value="OROTIDINE 5'-PHOSPHATE DECARBOXYLASE"/>
    <property type="match status" value="1"/>
</dbReference>
<dbReference type="Pfam" id="PF00215">
    <property type="entry name" value="OMPdecase"/>
    <property type="match status" value="1"/>
</dbReference>
<dbReference type="SMART" id="SM00934">
    <property type="entry name" value="OMPdecase"/>
    <property type="match status" value="1"/>
</dbReference>
<dbReference type="SUPFAM" id="SSF51366">
    <property type="entry name" value="Ribulose-phoshate binding barrel"/>
    <property type="match status" value="1"/>
</dbReference>
<dbReference type="PROSITE" id="PS00156">
    <property type="entry name" value="OMPDECASE"/>
    <property type="match status" value="1"/>
</dbReference>
<evidence type="ECO:0000255" key="1">
    <source>
        <dbReference type="HAMAP-Rule" id="MF_01215"/>
    </source>
</evidence>
<accession>Q0TRB0</accession>
<sequence length="287" mass="31812">MIADKLFEKVEKNGVVCVGLDTSLDYIPEEFKSKFSNESDMLFAFNKEIIDATLDVSACFKVQIAYYEALGLKGLESYKNTLSYLREKNALIIADIKRGDIAATAKMYAKAHFEGDFESDFITLNPYMGMDSIDPYLPYIEKNEKGVFVLVRTSNKGAEDIEYLEAGHGKKVYDVVGEKLNTLGKNYLGKHGYSSIGGVVGCTHQEEAKEMRDKLDTMPFLIPGYGAQGGTAKDVAAYLKNGNGGIVNSSRKILLAYKAMEDSKNFAECARKEAISMRDSIREAILK</sequence>
<comment type="catalytic activity">
    <reaction evidence="1">
        <text>orotidine 5'-phosphate + H(+) = UMP + CO2</text>
        <dbReference type="Rhea" id="RHEA:11596"/>
        <dbReference type="ChEBI" id="CHEBI:15378"/>
        <dbReference type="ChEBI" id="CHEBI:16526"/>
        <dbReference type="ChEBI" id="CHEBI:57538"/>
        <dbReference type="ChEBI" id="CHEBI:57865"/>
        <dbReference type="EC" id="4.1.1.23"/>
    </reaction>
</comment>
<comment type="pathway">
    <text evidence="1">Pyrimidine metabolism; UMP biosynthesis via de novo pathway; UMP from orotate: step 2/2.</text>
</comment>
<comment type="similarity">
    <text evidence="1">Belongs to the OMP decarboxylase family. Type 2 subfamily.</text>
</comment>
<feature type="chain" id="PRO_1000066465" description="Orotidine 5'-phosphate decarboxylase">
    <location>
        <begin position="1"/>
        <end position="287"/>
    </location>
</feature>
<feature type="active site" description="Proton donor" evidence="1">
    <location>
        <position position="97"/>
    </location>
</feature>
<proteinExistence type="inferred from homology"/>
<protein>
    <recommendedName>
        <fullName evidence="1">Orotidine 5'-phosphate decarboxylase</fullName>
        <ecNumber evidence="1">4.1.1.23</ecNumber>
    </recommendedName>
    <alternativeName>
        <fullName evidence="1">OMP decarboxylase</fullName>
        <shortName evidence="1">OMPDCase</shortName>
        <shortName evidence="1">OMPdecase</shortName>
    </alternativeName>
</protein>
<organism>
    <name type="scientific">Clostridium perfringens (strain ATCC 13124 / DSM 756 / JCM 1290 / NCIMB 6125 / NCTC 8237 / Type A)</name>
    <dbReference type="NCBI Taxonomy" id="195103"/>
    <lineage>
        <taxon>Bacteria</taxon>
        <taxon>Bacillati</taxon>
        <taxon>Bacillota</taxon>
        <taxon>Clostridia</taxon>
        <taxon>Eubacteriales</taxon>
        <taxon>Clostridiaceae</taxon>
        <taxon>Clostridium</taxon>
    </lineage>
</organism>
<name>PYRF_CLOP1</name>
<reference key="1">
    <citation type="journal article" date="2006" name="Genome Res.">
        <title>Skewed genomic variability in strains of the toxigenic bacterial pathogen, Clostridium perfringens.</title>
        <authorList>
            <person name="Myers G.S.A."/>
            <person name="Rasko D.A."/>
            <person name="Cheung J.K."/>
            <person name="Ravel J."/>
            <person name="Seshadri R."/>
            <person name="DeBoy R.T."/>
            <person name="Ren Q."/>
            <person name="Varga J."/>
            <person name="Awad M.M."/>
            <person name="Brinkac L.M."/>
            <person name="Daugherty S.C."/>
            <person name="Haft D.H."/>
            <person name="Dodson R.J."/>
            <person name="Madupu R."/>
            <person name="Nelson W.C."/>
            <person name="Rosovitz M.J."/>
            <person name="Sullivan S.A."/>
            <person name="Khouri H."/>
            <person name="Dimitrov G.I."/>
            <person name="Watkins K.L."/>
            <person name="Mulligan S."/>
            <person name="Benton J."/>
            <person name="Radune D."/>
            <person name="Fisher D.J."/>
            <person name="Atkins H.S."/>
            <person name="Hiscox T."/>
            <person name="Jost B.H."/>
            <person name="Billington S.J."/>
            <person name="Songer J.G."/>
            <person name="McClane B.A."/>
            <person name="Titball R.W."/>
            <person name="Rood J.I."/>
            <person name="Melville S.B."/>
            <person name="Paulsen I.T."/>
        </authorList>
    </citation>
    <scope>NUCLEOTIDE SEQUENCE [LARGE SCALE GENOMIC DNA]</scope>
    <source>
        <strain>ATCC 13124 / DSM 756 / JCM 1290 / NCIMB 6125 / NCTC 8237 / S 107 / Type A</strain>
    </source>
</reference>
<gene>
    <name evidence="1" type="primary">pyrF</name>
    <name type="ordered locus">CPF_1384</name>
</gene>